<comment type="cofactor">
    <cofactor evidence="1">
        <name>Zn(2+)</name>
        <dbReference type="ChEBI" id="CHEBI:29105"/>
    </cofactor>
    <text evidence="1">Binds 1 zinc ion per subunit.</text>
</comment>
<comment type="subcellular location">
    <subcellularLocation>
        <location evidence="1">Cell membrane</location>
        <topology evidence="1">Multi-pass membrane protein</topology>
    </subcellularLocation>
</comment>
<comment type="similarity">
    <text evidence="1">Belongs to the peptidase M48B family.</text>
</comment>
<dbReference type="EC" id="3.4.24.-" evidence="1"/>
<dbReference type="EMBL" id="AP010918">
    <property type="protein sequence ID" value="BAH24872.1"/>
    <property type="molecule type" value="Genomic_DNA"/>
</dbReference>
<dbReference type="RefSeq" id="WP_003402959.1">
    <property type="nucleotide sequence ID" value="NZ_CP014566.1"/>
</dbReference>
<dbReference type="KEGG" id="mbt:JTY_0578"/>
<dbReference type="HOGENOM" id="CLU_042266_3_1_11"/>
<dbReference type="GO" id="GO:0005886">
    <property type="term" value="C:plasma membrane"/>
    <property type="evidence" value="ECO:0007669"/>
    <property type="project" value="UniProtKB-SubCell"/>
</dbReference>
<dbReference type="GO" id="GO:0004222">
    <property type="term" value="F:metalloendopeptidase activity"/>
    <property type="evidence" value="ECO:0007669"/>
    <property type="project" value="UniProtKB-UniRule"/>
</dbReference>
<dbReference type="GO" id="GO:0008270">
    <property type="term" value="F:zinc ion binding"/>
    <property type="evidence" value="ECO:0007669"/>
    <property type="project" value="UniProtKB-UniRule"/>
</dbReference>
<dbReference type="GO" id="GO:0006508">
    <property type="term" value="P:proteolysis"/>
    <property type="evidence" value="ECO:0007669"/>
    <property type="project" value="UniProtKB-KW"/>
</dbReference>
<dbReference type="CDD" id="cd07336">
    <property type="entry name" value="M48B_HtpX_like"/>
    <property type="match status" value="1"/>
</dbReference>
<dbReference type="FunFam" id="3.30.2010.10:FF:000008">
    <property type="entry name" value="Protease HtpX homolog"/>
    <property type="match status" value="1"/>
</dbReference>
<dbReference type="Gene3D" id="3.30.2010.10">
    <property type="entry name" value="Metalloproteases ('zincins'), catalytic domain"/>
    <property type="match status" value="1"/>
</dbReference>
<dbReference type="HAMAP" id="MF_00188">
    <property type="entry name" value="Pept_M48_protease_HtpX"/>
    <property type="match status" value="1"/>
</dbReference>
<dbReference type="InterPro" id="IPR050083">
    <property type="entry name" value="HtpX_protease"/>
</dbReference>
<dbReference type="InterPro" id="IPR022919">
    <property type="entry name" value="Pept_M48_protease_HtpX"/>
</dbReference>
<dbReference type="InterPro" id="IPR001915">
    <property type="entry name" value="Peptidase_M48"/>
</dbReference>
<dbReference type="NCBIfam" id="NF002839">
    <property type="entry name" value="PRK03072.1"/>
    <property type="match status" value="1"/>
</dbReference>
<dbReference type="PANTHER" id="PTHR43221">
    <property type="entry name" value="PROTEASE HTPX"/>
    <property type="match status" value="1"/>
</dbReference>
<dbReference type="PANTHER" id="PTHR43221:SF1">
    <property type="entry name" value="PROTEASE HTPX"/>
    <property type="match status" value="1"/>
</dbReference>
<dbReference type="Pfam" id="PF01435">
    <property type="entry name" value="Peptidase_M48"/>
    <property type="match status" value="1"/>
</dbReference>
<dbReference type="PROSITE" id="PS00142">
    <property type="entry name" value="ZINC_PROTEASE"/>
    <property type="match status" value="1"/>
</dbReference>
<name>HTPX_MYCBT</name>
<feature type="chain" id="PRO_1000124232" description="Protease HtpX homolog">
    <location>
        <begin position="1"/>
        <end position="286"/>
    </location>
</feature>
<feature type="transmembrane region" description="Helical" evidence="1">
    <location>
        <begin position="10"/>
        <end position="30"/>
    </location>
</feature>
<feature type="transmembrane region" description="Helical" evidence="1">
    <location>
        <begin position="33"/>
        <end position="53"/>
    </location>
</feature>
<feature type="transmembrane region" description="Helical" evidence="1">
    <location>
        <begin position="145"/>
        <end position="165"/>
    </location>
</feature>
<feature type="transmembrane region" description="Helical" evidence="1">
    <location>
        <begin position="181"/>
        <end position="201"/>
    </location>
</feature>
<feature type="active site" evidence="1">
    <location>
        <position position="136"/>
    </location>
</feature>
<feature type="binding site" evidence="1">
    <location>
        <position position="135"/>
    </location>
    <ligand>
        <name>Zn(2+)</name>
        <dbReference type="ChEBI" id="CHEBI:29105"/>
        <note>catalytic</note>
    </ligand>
</feature>
<feature type="binding site" evidence="1">
    <location>
        <position position="139"/>
    </location>
    <ligand>
        <name>Zn(2+)</name>
        <dbReference type="ChEBI" id="CHEBI:29105"/>
        <note>catalytic</note>
    </ligand>
</feature>
<feature type="binding site" evidence="1">
    <location>
        <position position="206"/>
    </location>
    <ligand>
        <name>Zn(2+)</name>
        <dbReference type="ChEBI" id="CHEBI:29105"/>
        <note>catalytic</note>
    </ligand>
</feature>
<protein>
    <recommendedName>
        <fullName evidence="1">Protease HtpX homolog</fullName>
        <ecNumber evidence="1">3.4.24.-</ecNumber>
    </recommendedName>
</protein>
<proteinExistence type="inferred from homology"/>
<accession>C1AKP3</accession>
<sequence>MTWHPHANRLKTFLLLVGMSALIVAVGALFGRTALMLAALFAVGMNVYVYFNSDKLALRAMHAQPVSELQAPAMYRIVRELATSAHQPMPRLYISDTAAPNAFATGRNPRNAAVCCTTGILRILNERELRAVLGHELSHVYNRDILISCVAGALAAVITALANMAMWAGMFGGNRDNANPFALLLVALLGPIAATVIRMAVSRSREYQADESGAVLTGDPLALASALRKISGGVQAAPLPPEPQLASQAHLMIANPFRAGERIGSLFSTHPPIEDRIRRLEAMARG</sequence>
<gene>
    <name evidence="1" type="primary">htpX</name>
    <name type="ordered locus">JTY_0578</name>
</gene>
<reference key="1">
    <citation type="journal article" date="2009" name="Vaccine">
        <title>Whole genome sequence analysis of Mycobacterium bovis bacillus Calmette-Guerin (BCG) Tokyo 172: a comparative study of BCG vaccine substrains.</title>
        <authorList>
            <person name="Seki M."/>
            <person name="Honda I."/>
            <person name="Fujita I."/>
            <person name="Yano I."/>
            <person name="Yamamoto S."/>
            <person name="Koyama A."/>
        </authorList>
    </citation>
    <scope>NUCLEOTIDE SEQUENCE [LARGE SCALE GENOMIC DNA]</scope>
    <source>
        <strain>BCG / Tokyo 172 / ATCC 35737 / TMC 1019</strain>
    </source>
</reference>
<evidence type="ECO:0000255" key="1">
    <source>
        <dbReference type="HAMAP-Rule" id="MF_00188"/>
    </source>
</evidence>
<keyword id="KW-1003">Cell membrane</keyword>
<keyword id="KW-0378">Hydrolase</keyword>
<keyword id="KW-0472">Membrane</keyword>
<keyword id="KW-0479">Metal-binding</keyword>
<keyword id="KW-0482">Metalloprotease</keyword>
<keyword id="KW-0645">Protease</keyword>
<keyword id="KW-0812">Transmembrane</keyword>
<keyword id="KW-1133">Transmembrane helix</keyword>
<keyword id="KW-0862">Zinc</keyword>
<organism>
    <name type="scientific">Mycobacterium bovis (strain BCG / Tokyo 172 / ATCC 35737 / TMC 1019)</name>
    <dbReference type="NCBI Taxonomy" id="561275"/>
    <lineage>
        <taxon>Bacteria</taxon>
        <taxon>Bacillati</taxon>
        <taxon>Actinomycetota</taxon>
        <taxon>Actinomycetes</taxon>
        <taxon>Mycobacteriales</taxon>
        <taxon>Mycobacteriaceae</taxon>
        <taxon>Mycobacterium</taxon>
        <taxon>Mycobacterium tuberculosis complex</taxon>
    </lineage>
</organism>